<name>NRT22_ORYSJ</name>
<gene>
    <name evidence="7" type="primary">NRT2.2</name>
    <name evidence="10" type="ordered locus">Os02g0112600</name>
    <name evidence="7" type="ordered locus">LOC_Os02g02190</name>
    <name evidence="8" type="ORF">OJ1399_H05.7</name>
    <name evidence="11" type="ORF">OsJ_05080</name>
    <name evidence="9" type="ORF">P0501G04.36</name>
</gene>
<proteinExistence type="evidence at protein level"/>
<sequence length="533" mass="57230">MDSSTVGAPGSSLHGVTGREPAFAFSTEVGGEDAAAASKFDLPVDSEHKAKTIRLLSFANPHMRTFHLSWISFFSCFVSTFAAAPLVPIIRDNLNLTKADIGNAGVASVSGSIFSRLAMGAICDMLGPRYGCAFLIMLAAPTVFCMSLIDSAAGYIAVRFLIGFSLATFVSCQYWMSTMFNSKIIGLVNGLAAGWGNMGGGATQLIMPLVYDVIRKCGATPFTAWRLAYFVPGTLHVVMGVLVLTLGQDLPDGNLRSLQKKGDVNRDSFSRVLWYAVTNYRTWIFVLLYGYSMGVELTTDNVIAEYFYDRFDLDLRVAGIIAASFGMANIVARPTGGLLSDLGARYFGMRARLWNIWILQTAGGAFCLLLGRASTLPTSVVCMVLFSFCAQAACGAIFGVIPFVSRRSLGIISGMTGAGGNFGAGLTQLLFFTSSRYSTGTGLEYMGIMIMACTLPVVLVHFPQWGSMFLPPNAGAEEEHYYGSEWSEQEKSKGLHGASLKFAENSRSERGRRNVINAAAAAATPPNNSPEHA</sequence>
<reference key="1">
    <citation type="journal article" date="2005" name="Nature">
        <title>The map-based sequence of the rice genome.</title>
        <authorList>
            <consortium name="International rice genome sequencing project (IRGSP)"/>
        </authorList>
    </citation>
    <scope>NUCLEOTIDE SEQUENCE [LARGE SCALE GENOMIC DNA]</scope>
    <source>
        <strain>cv. Nipponbare</strain>
    </source>
</reference>
<reference key="2">
    <citation type="journal article" date="2008" name="Nucleic Acids Res.">
        <title>The rice annotation project database (RAP-DB): 2008 update.</title>
        <authorList>
            <consortium name="The rice annotation project (RAP)"/>
        </authorList>
    </citation>
    <scope>GENOME REANNOTATION</scope>
    <source>
        <strain>cv. Nipponbare</strain>
    </source>
</reference>
<reference key="3">
    <citation type="journal article" date="2013" name="Rice">
        <title>Improvement of the Oryza sativa Nipponbare reference genome using next generation sequence and optical map data.</title>
        <authorList>
            <person name="Kawahara Y."/>
            <person name="de la Bastide M."/>
            <person name="Hamilton J.P."/>
            <person name="Kanamori H."/>
            <person name="McCombie W.R."/>
            <person name="Ouyang S."/>
            <person name="Schwartz D.C."/>
            <person name="Tanaka T."/>
            <person name="Wu J."/>
            <person name="Zhou S."/>
            <person name="Childs K.L."/>
            <person name="Davidson R.M."/>
            <person name="Lin H."/>
            <person name="Quesada-Ocampo L."/>
            <person name="Vaillancourt B."/>
            <person name="Sakai H."/>
            <person name="Lee S.S."/>
            <person name="Kim J."/>
            <person name="Numa H."/>
            <person name="Itoh T."/>
            <person name="Buell C.R."/>
            <person name="Matsumoto T."/>
        </authorList>
    </citation>
    <scope>GENOME REANNOTATION</scope>
    <source>
        <strain>cv. Nipponbare</strain>
    </source>
</reference>
<reference key="4">
    <citation type="journal article" date="2005" name="PLoS Biol.">
        <title>The genomes of Oryza sativa: a history of duplications.</title>
        <authorList>
            <person name="Yu J."/>
            <person name="Wang J."/>
            <person name="Lin W."/>
            <person name="Li S."/>
            <person name="Li H."/>
            <person name="Zhou J."/>
            <person name="Ni P."/>
            <person name="Dong W."/>
            <person name="Hu S."/>
            <person name="Zeng C."/>
            <person name="Zhang J."/>
            <person name="Zhang Y."/>
            <person name="Li R."/>
            <person name="Xu Z."/>
            <person name="Li S."/>
            <person name="Li X."/>
            <person name="Zheng H."/>
            <person name="Cong L."/>
            <person name="Lin L."/>
            <person name="Yin J."/>
            <person name="Geng J."/>
            <person name="Li G."/>
            <person name="Shi J."/>
            <person name="Liu J."/>
            <person name="Lv H."/>
            <person name="Li J."/>
            <person name="Wang J."/>
            <person name="Deng Y."/>
            <person name="Ran L."/>
            <person name="Shi X."/>
            <person name="Wang X."/>
            <person name="Wu Q."/>
            <person name="Li C."/>
            <person name="Ren X."/>
            <person name="Wang J."/>
            <person name="Wang X."/>
            <person name="Li D."/>
            <person name="Liu D."/>
            <person name="Zhang X."/>
            <person name="Ji Z."/>
            <person name="Zhao W."/>
            <person name="Sun Y."/>
            <person name="Zhang Z."/>
            <person name="Bao J."/>
            <person name="Han Y."/>
            <person name="Dong L."/>
            <person name="Ji J."/>
            <person name="Chen P."/>
            <person name="Wu S."/>
            <person name="Liu J."/>
            <person name="Xiao Y."/>
            <person name="Bu D."/>
            <person name="Tan J."/>
            <person name="Yang L."/>
            <person name="Ye C."/>
            <person name="Zhang J."/>
            <person name="Xu J."/>
            <person name="Zhou Y."/>
            <person name="Yu Y."/>
            <person name="Zhang B."/>
            <person name="Zhuang S."/>
            <person name="Wei H."/>
            <person name="Liu B."/>
            <person name="Lei M."/>
            <person name="Yu H."/>
            <person name="Li Y."/>
            <person name="Xu H."/>
            <person name="Wei S."/>
            <person name="He X."/>
            <person name="Fang L."/>
            <person name="Zhang Z."/>
            <person name="Zhang Y."/>
            <person name="Huang X."/>
            <person name="Su Z."/>
            <person name="Tong W."/>
            <person name="Li J."/>
            <person name="Tong Z."/>
            <person name="Li S."/>
            <person name="Ye J."/>
            <person name="Wang L."/>
            <person name="Fang L."/>
            <person name="Lei T."/>
            <person name="Chen C.-S."/>
            <person name="Chen H.-C."/>
            <person name="Xu Z."/>
            <person name="Li H."/>
            <person name="Huang H."/>
            <person name="Zhang F."/>
            <person name="Xu H."/>
            <person name="Li N."/>
            <person name="Zhao C."/>
            <person name="Li S."/>
            <person name="Dong L."/>
            <person name="Huang Y."/>
            <person name="Li L."/>
            <person name="Xi Y."/>
            <person name="Qi Q."/>
            <person name="Li W."/>
            <person name="Zhang B."/>
            <person name="Hu W."/>
            <person name="Zhang Y."/>
            <person name="Tian X."/>
            <person name="Jiao Y."/>
            <person name="Liang X."/>
            <person name="Jin J."/>
            <person name="Gao L."/>
            <person name="Zheng W."/>
            <person name="Hao B."/>
            <person name="Liu S.-M."/>
            <person name="Wang W."/>
            <person name="Yuan L."/>
            <person name="Cao M."/>
            <person name="McDermott J."/>
            <person name="Samudrala R."/>
            <person name="Wang J."/>
            <person name="Wong G.K.-S."/>
            <person name="Yang H."/>
        </authorList>
    </citation>
    <scope>NUCLEOTIDE SEQUENCE [LARGE SCALE GENOMIC DNA]</scope>
    <source>
        <strain>cv. Nipponbare</strain>
    </source>
</reference>
<reference key="5">
    <citation type="journal article" date="2003" name="Science">
        <title>Collection, mapping, and annotation of over 28,000 cDNA clones from japonica rice.</title>
        <authorList>
            <consortium name="The rice full-length cDNA consortium"/>
        </authorList>
    </citation>
    <scope>NUCLEOTIDE SEQUENCE [LARGE SCALE MRNA]</scope>
    <source>
        <strain>cv. Nipponbare</strain>
    </source>
</reference>
<reference key="6">
    <citation type="journal article" date="2009" name="Breed. Sci.">
        <title>Production and characterization of transgenic rice plants carrying a high-affinity nitrate transporter gene (OsNRT2.1).</title>
        <authorList>
            <person name="Katayama H."/>
            <person name="Mori M."/>
            <person name="Kawamura Y."/>
            <person name="Tanaka T."/>
            <person name="Mori M."/>
            <person name="Hasegawa H."/>
        </authorList>
    </citation>
    <scope>FUNCTION</scope>
</reference>
<reference key="7">
    <citation type="journal article" date="2011" name="J. Exp. Bot.">
        <title>Spatial expression and regulation of rice high-affinity nitrate transporters by nitrogen and carbon status.</title>
        <authorList>
            <person name="Feng H."/>
            <person name="Yan M."/>
            <person name="Fan X."/>
            <person name="Li B."/>
            <person name="Shen Q."/>
            <person name="Miller A.J."/>
            <person name="Xu G."/>
        </authorList>
    </citation>
    <scope>FUNCTION</scope>
    <scope>TISSUE SPECIFICITY</scope>
    <scope>INDUCTION</scope>
</reference>
<reference key="8">
    <citation type="journal article" date="2011" name="J. Plant Res.">
        <title>High-affinity nitrate uptake by rice (Oryza sativa) coleoptiles.</title>
        <authorList>
            <person name="Takayanagi S."/>
            <person name="Takagi Y."/>
            <person name="Araki R."/>
            <person name="Hasegawa H."/>
        </authorList>
    </citation>
    <scope>INDUCTION BY NITRATE</scope>
</reference>
<reference key="9">
    <citation type="journal article" date="2011" name="Plant Cell Environ.">
        <title>Rice OsNAR2.1 interacts with OsNRT2.1, OsNRT2.2 and OsNRT2.3a nitrate transporters to provide uptake over high and low concentration ranges.</title>
        <authorList>
            <person name="Yan M."/>
            <person name="Fan X."/>
            <person name="Feng H."/>
            <person name="Miller A.J."/>
            <person name="Shen Q."/>
            <person name="Xu G."/>
        </authorList>
    </citation>
    <scope>FUNCTION</scope>
    <scope>BIOPHYSICOCHEMICAL PROPERTIES</scope>
    <scope>INTERACTION WITH NAR2.1</scope>
    <scope>INDUCTION</scope>
</reference>
<organism>
    <name type="scientific">Oryza sativa subsp. japonica</name>
    <name type="common">Rice</name>
    <dbReference type="NCBI Taxonomy" id="39947"/>
    <lineage>
        <taxon>Eukaryota</taxon>
        <taxon>Viridiplantae</taxon>
        <taxon>Streptophyta</taxon>
        <taxon>Embryophyta</taxon>
        <taxon>Tracheophyta</taxon>
        <taxon>Spermatophyta</taxon>
        <taxon>Magnoliopsida</taxon>
        <taxon>Liliopsida</taxon>
        <taxon>Poales</taxon>
        <taxon>Poaceae</taxon>
        <taxon>BOP clade</taxon>
        <taxon>Oryzoideae</taxon>
        <taxon>Oryzeae</taxon>
        <taxon>Oryzinae</taxon>
        <taxon>Oryza</taxon>
        <taxon>Oryza sativa</taxon>
    </lineage>
</organism>
<evidence type="ECO:0000250" key="1"/>
<evidence type="ECO:0000255" key="2"/>
<evidence type="ECO:0000269" key="3">
    <source>
    </source>
</evidence>
<evidence type="ECO:0000269" key="4">
    <source>
    </source>
</evidence>
<evidence type="ECO:0000269" key="5">
    <source>
    </source>
</evidence>
<evidence type="ECO:0000269" key="6">
    <source ref="6"/>
</evidence>
<evidence type="ECO:0000305" key="7"/>
<evidence type="ECO:0000312" key="8">
    <source>
        <dbReference type="EMBL" id="BAD07629.1"/>
    </source>
</evidence>
<evidence type="ECO:0000312" key="9">
    <source>
        <dbReference type="EMBL" id="BAD07853.1"/>
    </source>
</evidence>
<evidence type="ECO:0000312" key="10">
    <source>
        <dbReference type="EMBL" id="BAS76626.1"/>
    </source>
</evidence>
<evidence type="ECO:0000312" key="11">
    <source>
        <dbReference type="EMBL" id="EAZ21473.1"/>
    </source>
</evidence>
<feature type="chain" id="PRO_0000430005" description="High-affinity nitrate transporter 2.2">
    <location>
        <begin position="1"/>
        <end position="533"/>
    </location>
</feature>
<feature type="transmembrane region" description="Helical" evidence="2">
    <location>
        <begin position="70"/>
        <end position="90"/>
    </location>
</feature>
<feature type="transmembrane region" description="Helical" evidence="2">
    <location>
        <begin position="101"/>
        <end position="122"/>
    </location>
</feature>
<feature type="transmembrane region" description="Helical" evidence="2">
    <location>
        <begin position="133"/>
        <end position="153"/>
    </location>
</feature>
<feature type="transmembrane region" description="Helical" evidence="2">
    <location>
        <begin position="160"/>
        <end position="180"/>
    </location>
</feature>
<feature type="transmembrane region" description="Helical" evidence="2">
    <location>
        <begin position="190"/>
        <end position="210"/>
    </location>
</feature>
<feature type="transmembrane region" description="Helical" evidence="2">
    <location>
        <begin position="227"/>
        <end position="247"/>
    </location>
</feature>
<feature type="transmembrane region" description="Helical" evidence="2">
    <location>
        <begin position="283"/>
        <end position="303"/>
    </location>
</feature>
<feature type="transmembrane region" description="Helical" evidence="2">
    <location>
        <begin position="319"/>
        <end position="339"/>
    </location>
</feature>
<feature type="transmembrane region" description="Helical" evidence="2">
    <location>
        <begin position="351"/>
        <end position="371"/>
    </location>
</feature>
<feature type="transmembrane region" description="Helical" evidence="2">
    <location>
        <begin position="384"/>
        <end position="404"/>
    </location>
</feature>
<feature type="transmembrane region" description="Helical" evidence="2">
    <location>
        <begin position="411"/>
        <end position="431"/>
    </location>
</feature>
<feature type="transmembrane region" description="Helical" evidence="2">
    <location>
        <begin position="442"/>
        <end position="462"/>
    </location>
</feature>
<keyword id="KW-1003">Cell membrane</keyword>
<keyword id="KW-0472">Membrane</keyword>
<keyword id="KW-0534">Nitrate assimilation</keyword>
<keyword id="KW-1185">Reference proteome</keyword>
<keyword id="KW-0812">Transmembrane</keyword>
<keyword id="KW-1133">Transmembrane helix</keyword>
<comment type="function">
    <text evidence="4 5 6">Involved in nitrate transport, but does not seem to be able to mediate transport by its own. Acts as a dual component transporter with NAR2.1. Imports nitrate with high affinity when expressed with NAR2.1 in a heterologous system (Xenopus oocytes).</text>
</comment>
<comment type="biophysicochemical properties">
    <kinetics>
        <KM evidence="5">34 uM for nitrate</KM>
    </kinetics>
</comment>
<comment type="subunit">
    <text evidence="1 5">Heterotetramer composed of two NRT2.2 and two NAR2.1 (By similarity). Interacts with NAR2.1.</text>
</comment>
<comment type="subcellular location">
    <subcellularLocation>
        <location evidence="7">Cell membrane</location>
        <topology evidence="7">Multi-pass membrane protein</topology>
    </subcellularLocation>
</comment>
<comment type="tissue specificity">
    <text evidence="4">Expressed in primary and lateral roots, root-shoot junction zone, vascular tissues of adventitious root primordia, leaves, embryo and coleoptiles of germinating seeds, husks and anthers.</text>
</comment>
<comment type="induction">
    <text evidence="3 4 5">Circadian-regulation with a peak in the middle of the morning and at the end of the light period. Induced by nitrate and sucrose in roots. Down-regulated by ammonium, glutamine, asparagine and aspartate in roots.</text>
</comment>
<comment type="miscellaneous">
    <text>Plants over-expressing NRT2.2 have accelerated growth under low nitrate conditions (Ref.6).</text>
</comment>
<comment type="similarity">
    <text evidence="7">Belongs to the major facilitator superfamily. Nitrate/nitrite porter (TC 2.A.1.8) family.</text>
</comment>
<protein>
    <recommendedName>
        <fullName>High-affinity nitrate transporter 2.2</fullName>
        <shortName>OsNRT2.2</shortName>
    </recommendedName>
</protein>
<accession>P0DKH0</accession>
<accession>A0A0N7KEJ9</accession>
<accession>Q6ZH34</accession>
<dbReference type="EMBL" id="AP004090">
    <property type="protein sequence ID" value="BAD07629.1"/>
    <property type="molecule type" value="Genomic_DNA"/>
</dbReference>
<dbReference type="EMBL" id="AP004752">
    <property type="protein sequence ID" value="BAD07853.1"/>
    <property type="molecule type" value="Genomic_DNA"/>
</dbReference>
<dbReference type="EMBL" id="AP008208">
    <property type="protein sequence ID" value="BAF07573.1"/>
    <property type="molecule type" value="Genomic_DNA"/>
</dbReference>
<dbReference type="EMBL" id="AP014958">
    <property type="protein sequence ID" value="BAS76626.1"/>
    <property type="molecule type" value="Genomic_DNA"/>
</dbReference>
<dbReference type="EMBL" id="CM000139">
    <property type="protein sequence ID" value="EAZ21473.1"/>
    <property type="molecule type" value="Genomic_DNA"/>
</dbReference>
<dbReference type="EMBL" id="AK109733">
    <property type="protein sequence ID" value="BAG98877.1"/>
    <property type="molecule type" value="mRNA"/>
</dbReference>
<dbReference type="RefSeq" id="XP_015623596.1">
    <property type="nucleotide sequence ID" value="XM_015768110.1"/>
</dbReference>
<dbReference type="RefSeq" id="XP_015623638.1">
    <property type="nucleotide sequence ID" value="XM_015768152.1"/>
</dbReference>
<dbReference type="SMR" id="P0DKH0"/>
<dbReference type="FunCoup" id="P0DKH0">
    <property type="interactions" value="181"/>
</dbReference>
<dbReference type="STRING" id="39947.P0DKH0"/>
<dbReference type="PaxDb" id="39947-P0DKH0"/>
<dbReference type="EnsemblPlants" id="Os02t0112100-01">
    <property type="protein sequence ID" value="Os02t0112100-01"/>
    <property type="gene ID" value="Os02g0112100"/>
</dbReference>
<dbReference type="EnsemblPlants" id="Os02t0112600-01">
    <property type="protein sequence ID" value="Os02t0112600-01"/>
    <property type="gene ID" value="Os02g0112600"/>
</dbReference>
<dbReference type="Gramene" id="Os02t0112100-01">
    <property type="protein sequence ID" value="Os02t0112100-01"/>
    <property type="gene ID" value="Os02g0112100"/>
</dbReference>
<dbReference type="Gramene" id="Os02t0112600-01">
    <property type="protein sequence ID" value="Os02t0112600-01"/>
    <property type="gene ID" value="Os02g0112600"/>
</dbReference>
<dbReference type="KEGG" id="dosa:Os02g0112600"/>
<dbReference type="HOGENOM" id="CLU_024204_0_0_1"/>
<dbReference type="InParanoid" id="P0DKH0"/>
<dbReference type="OrthoDB" id="605532at2759"/>
<dbReference type="Proteomes" id="UP000000763">
    <property type="component" value="Chromosome 2"/>
</dbReference>
<dbReference type="Proteomes" id="UP000007752">
    <property type="component" value="Chromosome 2"/>
</dbReference>
<dbReference type="Proteomes" id="UP000059680">
    <property type="component" value="Chromosome 2"/>
</dbReference>
<dbReference type="ExpressionAtlas" id="P0DKH0">
    <property type="expression patterns" value="baseline and differential"/>
</dbReference>
<dbReference type="GO" id="GO:0005886">
    <property type="term" value="C:plasma membrane"/>
    <property type="evidence" value="ECO:0007669"/>
    <property type="project" value="UniProtKB-SubCell"/>
</dbReference>
<dbReference type="GO" id="GO:0015112">
    <property type="term" value="F:nitrate transmembrane transporter activity"/>
    <property type="evidence" value="ECO:0007669"/>
    <property type="project" value="InterPro"/>
</dbReference>
<dbReference type="GO" id="GO:0042128">
    <property type="term" value="P:nitrate assimilation"/>
    <property type="evidence" value="ECO:0007669"/>
    <property type="project" value="UniProtKB-KW"/>
</dbReference>
<dbReference type="GO" id="GO:0015706">
    <property type="term" value="P:nitrate transmembrane transport"/>
    <property type="evidence" value="ECO:0000314"/>
    <property type="project" value="UniProtKB"/>
</dbReference>
<dbReference type="CDD" id="cd17341">
    <property type="entry name" value="MFS_NRT2_like"/>
    <property type="match status" value="1"/>
</dbReference>
<dbReference type="FunFam" id="1.20.1250.20:FF:000048">
    <property type="entry name" value="High affinity nitrate transporter"/>
    <property type="match status" value="1"/>
</dbReference>
<dbReference type="FunFam" id="1.20.1250.20:FF:000053">
    <property type="entry name" value="Nitrate transporter 2.1"/>
    <property type="match status" value="1"/>
</dbReference>
<dbReference type="Gene3D" id="1.20.1250.20">
    <property type="entry name" value="MFS general substrate transporter like domains"/>
    <property type="match status" value="2"/>
</dbReference>
<dbReference type="InterPro" id="IPR011701">
    <property type="entry name" value="MFS"/>
</dbReference>
<dbReference type="InterPro" id="IPR036259">
    <property type="entry name" value="MFS_trans_sf"/>
</dbReference>
<dbReference type="InterPro" id="IPR044772">
    <property type="entry name" value="NO3_transporter"/>
</dbReference>
<dbReference type="PANTHER" id="PTHR23515">
    <property type="entry name" value="HIGH-AFFINITY NITRATE TRANSPORTER 2.3"/>
    <property type="match status" value="1"/>
</dbReference>
<dbReference type="Pfam" id="PF07690">
    <property type="entry name" value="MFS_1"/>
    <property type="match status" value="1"/>
</dbReference>
<dbReference type="SUPFAM" id="SSF103473">
    <property type="entry name" value="MFS general substrate transporter"/>
    <property type="match status" value="1"/>
</dbReference>